<sequence>MDTPNKDDSIIRFSVSLQQNLLDELDNRIIKNGYSSRSELVRDMIREKLVEDNWAEDNPNDESKIAVLVVIYDHHQRELNQRMIDIQHASGTHVLCTTHIHMDAHNCLETIILQGNSSEIQRLQLEIGGLRGVKFAKLTKASSFECNE</sequence>
<evidence type="ECO:0000255" key="1">
    <source>
        <dbReference type="HAMAP-Rule" id="MF_00476"/>
    </source>
</evidence>
<accession>B2UVA2</accession>
<comment type="function">
    <text evidence="1">Transcriptional regulator.</text>
</comment>
<comment type="cofactor">
    <cofactor evidence="1">
        <name>Ni(2+)</name>
        <dbReference type="ChEBI" id="CHEBI:49786"/>
    </cofactor>
    <text evidence="1">Binds 1 nickel ion per subunit.</text>
</comment>
<comment type="similarity">
    <text evidence="1">Belongs to the transcriptional regulatory CopG/NikR family.</text>
</comment>
<reference key="1">
    <citation type="submission" date="2008-05" db="EMBL/GenBank/DDBJ databases">
        <title>Genome sequence of Helicobacter pylori from the remote Amazon: traces of Asian ancestry of the first Americans.</title>
        <authorList>
            <person name="Kersulyte D."/>
            <person name="Kalia A."/>
            <person name="Gilman R.H."/>
            <person name="Berg D.E."/>
        </authorList>
    </citation>
    <scope>NUCLEOTIDE SEQUENCE [LARGE SCALE GENOMIC DNA]</scope>
    <source>
        <strain>Shi470</strain>
    </source>
</reference>
<feature type="chain" id="PRO_1000125830" description="Putative nickel-responsive regulator">
    <location>
        <begin position="1"/>
        <end position="148"/>
    </location>
</feature>
<feature type="binding site" evidence="1">
    <location>
        <position position="88"/>
    </location>
    <ligand>
        <name>Ni(2+)</name>
        <dbReference type="ChEBI" id="CHEBI:49786"/>
    </ligand>
</feature>
<feature type="binding site" evidence="1">
    <location>
        <position position="99"/>
    </location>
    <ligand>
        <name>Ni(2+)</name>
        <dbReference type="ChEBI" id="CHEBI:49786"/>
    </ligand>
</feature>
<feature type="binding site" evidence="1">
    <location>
        <position position="101"/>
    </location>
    <ligand>
        <name>Ni(2+)</name>
        <dbReference type="ChEBI" id="CHEBI:49786"/>
    </ligand>
</feature>
<feature type="binding site" evidence="1">
    <location>
        <position position="107"/>
    </location>
    <ligand>
        <name>Ni(2+)</name>
        <dbReference type="ChEBI" id="CHEBI:49786"/>
    </ligand>
</feature>
<organism>
    <name type="scientific">Helicobacter pylori (strain Shi470)</name>
    <dbReference type="NCBI Taxonomy" id="512562"/>
    <lineage>
        <taxon>Bacteria</taxon>
        <taxon>Pseudomonadati</taxon>
        <taxon>Campylobacterota</taxon>
        <taxon>Epsilonproteobacteria</taxon>
        <taxon>Campylobacterales</taxon>
        <taxon>Helicobacteraceae</taxon>
        <taxon>Helicobacter</taxon>
    </lineage>
</organism>
<keyword id="KW-0238">DNA-binding</keyword>
<keyword id="KW-0479">Metal-binding</keyword>
<keyword id="KW-0533">Nickel</keyword>
<keyword id="KW-0804">Transcription</keyword>
<keyword id="KW-0805">Transcription regulation</keyword>
<gene>
    <name type="ordered locus">HPSH_06920</name>
</gene>
<proteinExistence type="inferred from homology"/>
<dbReference type="EMBL" id="CP001072">
    <property type="protein sequence ID" value="ACD48784.1"/>
    <property type="molecule type" value="Genomic_DNA"/>
</dbReference>
<dbReference type="RefSeq" id="WP_000380785.1">
    <property type="nucleotide sequence ID" value="NC_010698.2"/>
</dbReference>
<dbReference type="BMRB" id="B2UVA2"/>
<dbReference type="SMR" id="B2UVA2"/>
<dbReference type="KEGG" id="hps:HPSH_06920"/>
<dbReference type="HOGENOM" id="CLU_113319_1_2_7"/>
<dbReference type="GO" id="GO:0003677">
    <property type="term" value="F:DNA binding"/>
    <property type="evidence" value="ECO:0007669"/>
    <property type="project" value="UniProtKB-KW"/>
</dbReference>
<dbReference type="GO" id="GO:0003700">
    <property type="term" value="F:DNA-binding transcription factor activity"/>
    <property type="evidence" value="ECO:0007669"/>
    <property type="project" value="UniProtKB-UniRule"/>
</dbReference>
<dbReference type="GO" id="GO:0016151">
    <property type="term" value="F:nickel cation binding"/>
    <property type="evidence" value="ECO:0007669"/>
    <property type="project" value="UniProtKB-UniRule"/>
</dbReference>
<dbReference type="GO" id="GO:0010045">
    <property type="term" value="P:response to nickel cation"/>
    <property type="evidence" value="ECO:0007669"/>
    <property type="project" value="InterPro"/>
</dbReference>
<dbReference type="CDD" id="cd22231">
    <property type="entry name" value="RHH_NikR_HicB-like"/>
    <property type="match status" value="1"/>
</dbReference>
<dbReference type="FunFam" id="1.10.1220.10:FF:000010">
    <property type="entry name" value="Putative nickel-responsive regulator"/>
    <property type="match status" value="1"/>
</dbReference>
<dbReference type="FunFam" id="3.30.70.1150:FF:000004">
    <property type="entry name" value="Putative nickel-responsive regulator"/>
    <property type="match status" value="1"/>
</dbReference>
<dbReference type="Gene3D" id="3.30.70.1150">
    <property type="entry name" value="ACT-like. Chain A, domain 2"/>
    <property type="match status" value="1"/>
</dbReference>
<dbReference type="Gene3D" id="1.10.1220.10">
    <property type="entry name" value="Met repressor-like"/>
    <property type="match status" value="1"/>
</dbReference>
<dbReference type="HAMAP" id="MF_00476">
    <property type="entry name" value="NikR"/>
    <property type="match status" value="1"/>
</dbReference>
<dbReference type="InterPro" id="IPR027271">
    <property type="entry name" value="Acetolactate_synth/TF_NikR_C"/>
</dbReference>
<dbReference type="InterPro" id="IPR045865">
    <property type="entry name" value="ACT-like_dom_sf"/>
</dbReference>
<dbReference type="InterPro" id="IPR013321">
    <property type="entry name" value="Arc_rbn_hlx_hlx"/>
</dbReference>
<dbReference type="InterPro" id="IPR002145">
    <property type="entry name" value="CopG"/>
</dbReference>
<dbReference type="InterPro" id="IPR050192">
    <property type="entry name" value="CopG/NikR_regulator"/>
</dbReference>
<dbReference type="InterPro" id="IPR022988">
    <property type="entry name" value="Ni_resp_reg_NikR"/>
</dbReference>
<dbReference type="InterPro" id="IPR010985">
    <property type="entry name" value="Ribbon_hlx_hlx"/>
</dbReference>
<dbReference type="InterPro" id="IPR014864">
    <property type="entry name" value="TF_NikR_Ni-bd_C"/>
</dbReference>
<dbReference type="NCBIfam" id="NF001884">
    <property type="entry name" value="PRK00630.1"/>
    <property type="match status" value="1"/>
</dbReference>
<dbReference type="NCBIfam" id="NF002169">
    <property type="entry name" value="PRK01002.1"/>
    <property type="match status" value="1"/>
</dbReference>
<dbReference type="NCBIfam" id="NF002815">
    <property type="entry name" value="PRK02967.1"/>
    <property type="match status" value="1"/>
</dbReference>
<dbReference type="NCBIfam" id="NF003381">
    <property type="entry name" value="PRK04460.1"/>
    <property type="match status" value="1"/>
</dbReference>
<dbReference type="PANTHER" id="PTHR34719">
    <property type="entry name" value="NICKEL-RESPONSIVE REGULATOR"/>
    <property type="match status" value="1"/>
</dbReference>
<dbReference type="PANTHER" id="PTHR34719:SF2">
    <property type="entry name" value="NICKEL-RESPONSIVE REGULATOR"/>
    <property type="match status" value="1"/>
</dbReference>
<dbReference type="Pfam" id="PF08753">
    <property type="entry name" value="NikR_C"/>
    <property type="match status" value="1"/>
</dbReference>
<dbReference type="Pfam" id="PF01402">
    <property type="entry name" value="RHH_1"/>
    <property type="match status" value="1"/>
</dbReference>
<dbReference type="SUPFAM" id="SSF55021">
    <property type="entry name" value="ACT-like"/>
    <property type="match status" value="1"/>
</dbReference>
<dbReference type="SUPFAM" id="SSF47598">
    <property type="entry name" value="Ribbon-helix-helix"/>
    <property type="match status" value="1"/>
</dbReference>
<protein>
    <recommendedName>
        <fullName evidence="1">Putative nickel-responsive regulator</fullName>
    </recommendedName>
</protein>
<name>NIKR_HELPS</name>